<accession>Q1QZ33</accession>
<name>SURA_CHRSD</name>
<proteinExistence type="inferred from homology"/>
<evidence type="ECO:0000255" key="1">
    <source>
        <dbReference type="HAMAP-Rule" id="MF_01183"/>
    </source>
</evidence>
<gene>
    <name evidence="1" type="primary">surA</name>
    <name type="ordered locus">Csal_0918</name>
</gene>
<organism>
    <name type="scientific">Chromohalobacter salexigens (strain ATCC BAA-138 / DSM 3043 / CIP 106854 / NCIMB 13768 / 1H11)</name>
    <dbReference type="NCBI Taxonomy" id="290398"/>
    <lineage>
        <taxon>Bacteria</taxon>
        <taxon>Pseudomonadati</taxon>
        <taxon>Pseudomonadota</taxon>
        <taxon>Gammaproteobacteria</taxon>
        <taxon>Oceanospirillales</taxon>
        <taxon>Halomonadaceae</taxon>
        <taxon>Chromohalobacter</taxon>
    </lineage>
</organism>
<feature type="signal peptide" evidence="1">
    <location>
        <begin position="1"/>
        <end position="24"/>
    </location>
</feature>
<feature type="chain" id="PRO_5000112633" description="Chaperone SurA">
    <location>
        <begin position="25"/>
        <end position="435"/>
    </location>
</feature>
<feature type="domain" description="PpiC 1" evidence="1">
    <location>
        <begin position="173"/>
        <end position="274"/>
    </location>
</feature>
<feature type="domain" description="PpiC 2" evidence="1">
    <location>
        <begin position="286"/>
        <end position="385"/>
    </location>
</feature>
<protein>
    <recommendedName>
        <fullName evidence="1">Chaperone SurA</fullName>
    </recommendedName>
    <alternativeName>
        <fullName evidence="1">Peptidyl-prolyl cis-trans isomerase SurA</fullName>
        <shortName evidence="1">PPIase SurA</shortName>
        <ecNumber evidence="1">5.2.1.8</ecNumber>
    </alternativeName>
    <alternativeName>
        <fullName evidence="1">Rotamase SurA</fullName>
    </alternativeName>
</protein>
<keyword id="KW-0143">Chaperone</keyword>
<keyword id="KW-0413">Isomerase</keyword>
<keyword id="KW-0574">Periplasm</keyword>
<keyword id="KW-1185">Reference proteome</keyword>
<keyword id="KW-0677">Repeat</keyword>
<keyword id="KW-0697">Rotamase</keyword>
<keyword id="KW-0732">Signal</keyword>
<reference key="1">
    <citation type="journal article" date="2011" name="Stand. Genomic Sci.">
        <title>Complete genome sequence of the halophilic and highly halotolerant Chromohalobacter salexigens type strain (1H11(T)).</title>
        <authorList>
            <person name="Copeland A."/>
            <person name="O'Connor K."/>
            <person name="Lucas S."/>
            <person name="Lapidus A."/>
            <person name="Berry K.W."/>
            <person name="Detter J.C."/>
            <person name="Del Rio T.G."/>
            <person name="Hammon N."/>
            <person name="Dalin E."/>
            <person name="Tice H."/>
            <person name="Pitluck S."/>
            <person name="Bruce D."/>
            <person name="Goodwin L."/>
            <person name="Han C."/>
            <person name="Tapia R."/>
            <person name="Saunders E."/>
            <person name="Schmutz J."/>
            <person name="Brettin T."/>
            <person name="Larimer F."/>
            <person name="Land M."/>
            <person name="Hauser L."/>
            <person name="Vargas C."/>
            <person name="Nieto J.J."/>
            <person name="Kyrpides N.C."/>
            <person name="Ivanova N."/>
            <person name="Goker M."/>
            <person name="Klenk H.P."/>
            <person name="Csonka L.N."/>
            <person name="Woyke T."/>
        </authorList>
    </citation>
    <scope>NUCLEOTIDE SEQUENCE [LARGE SCALE GENOMIC DNA]</scope>
    <source>
        <strain>ATCC BAA-138 / DSM 3043 / CIP 106854 / NCIMB 13768 / 1H11</strain>
    </source>
</reference>
<comment type="function">
    <text evidence="1">Chaperone involved in the correct folding and assembly of outer membrane proteins. Recognizes specific patterns of aromatic residues and the orientation of their side chains, which are found more frequently in integral outer membrane proteins. May act in both early periplasmic and late outer membrane-associated steps of protein maturation.</text>
</comment>
<comment type="catalytic activity">
    <reaction evidence="1">
        <text>[protein]-peptidylproline (omega=180) = [protein]-peptidylproline (omega=0)</text>
        <dbReference type="Rhea" id="RHEA:16237"/>
        <dbReference type="Rhea" id="RHEA-COMP:10747"/>
        <dbReference type="Rhea" id="RHEA-COMP:10748"/>
        <dbReference type="ChEBI" id="CHEBI:83833"/>
        <dbReference type="ChEBI" id="CHEBI:83834"/>
        <dbReference type="EC" id="5.2.1.8"/>
    </reaction>
</comment>
<comment type="subcellular location">
    <subcellularLocation>
        <location evidence="1">Periplasm</location>
    </subcellularLocation>
    <text evidence="1">Is capable of associating with the outer membrane.</text>
</comment>
<comment type="domain">
    <text evidence="1">The PPIase activity resides only in the second parvulin domain. The N-terminal region and the C-terminal tail are necessary and sufficient for the chaperone activity of SurA. The PPIase activity is dispensable for SurA to function as a chaperone. The N-terminal region and the C-terminal tail are also required for porin recognition.</text>
</comment>
<dbReference type="EC" id="5.2.1.8" evidence="1"/>
<dbReference type="EMBL" id="CP000285">
    <property type="protein sequence ID" value="ABE58275.1"/>
    <property type="molecule type" value="Genomic_DNA"/>
</dbReference>
<dbReference type="RefSeq" id="WP_011506221.1">
    <property type="nucleotide sequence ID" value="NC_007963.1"/>
</dbReference>
<dbReference type="SMR" id="Q1QZ33"/>
<dbReference type="STRING" id="290398.Csal_0918"/>
<dbReference type="GeneID" id="95333674"/>
<dbReference type="KEGG" id="csa:Csal_0918"/>
<dbReference type="eggNOG" id="COG0760">
    <property type="taxonomic scope" value="Bacteria"/>
</dbReference>
<dbReference type="HOGENOM" id="CLU_034646_11_0_6"/>
<dbReference type="OrthoDB" id="14196at2"/>
<dbReference type="Proteomes" id="UP000000239">
    <property type="component" value="Chromosome"/>
</dbReference>
<dbReference type="GO" id="GO:0030288">
    <property type="term" value="C:outer membrane-bounded periplasmic space"/>
    <property type="evidence" value="ECO:0007669"/>
    <property type="project" value="InterPro"/>
</dbReference>
<dbReference type="GO" id="GO:0042277">
    <property type="term" value="F:peptide binding"/>
    <property type="evidence" value="ECO:0007669"/>
    <property type="project" value="InterPro"/>
</dbReference>
<dbReference type="GO" id="GO:0003755">
    <property type="term" value="F:peptidyl-prolyl cis-trans isomerase activity"/>
    <property type="evidence" value="ECO:0007669"/>
    <property type="project" value="UniProtKB-UniRule"/>
</dbReference>
<dbReference type="GO" id="GO:0051082">
    <property type="term" value="F:unfolded protein binding"/>
    <property type="evidence" value="ECO:0007669"/>
    <property type="project" value="UniProtKB-UniRule"/>
</dbReference>
<dbReference type="GO" id="GO:0043165">
    <property type="term" value="P:Gram-negative-bacterium-type cell outer membrane assembly"/>
    <property type="evidence" value="ECO:0007669"/>
    <property type="project" value="InterPro"/>
</dbReference>
<dbReference type="GO" id="GO:0006457">
    <property type="term" value="P:protein folding"/>
    <property type="evidence" value="ECO:0007669"/>
    <property type="project" value="UniProtKB-UniRule"/>
</dbReference>
<dbReference type="GO" id="GO:0050821">
    <property type="term" value="P:protein stabilization"/>
    <property type="evidence" value="ECO:0007669"/>
    <property type="project" value="InterPro"/>
</dbReference>
<dbReference type="Gene3D" id="3.10.50.40">
    <property type="match status" value="2"/>
</dbReference>
<dbReference type="Gene3D" id="1.10.4030.10">
    <property type="entry name" value="Porin chaperone SurA, peptide-binding domain"/>
    <property type="match status" value="1"/>
</dbReference>
<dbReference type="HAMAP" id="MF_01183">
    <property type="entry name" value="Chaperone_SurA"/>
    <property type="match status" value="1"/>
</dbReference>
<dbReference type="InterPro" id="IPR050280">
    <property type="entry name" value="OMP_Chaperone_SurA"/>
</dbReference>
<dbReference type="InterPro" id="IPR046357">
    <property type="entry name" value="PPIase_dom_sf"/>
</dbReference>
<dbReference type="InterPro" id="IPR000297">
    <property type="entry name" value="PPIase_PpiC"/>
</dbReference>
<dbReference type="InterPro" id="IPR023058">
    <property type="entry name" value="PPIase_PpiC_CS"/>
</dbReference>
<dbReference type="InterPro" id="IPR023034">
    <property type="entry name" value="PPIase_SurA"/>
</dbReference>
<dbReference type="InterPro" id="IPR015391">
    <property type="entry name" value="SurA_N"/>
</dbReference>
<dbReference type="InterPro" id="IPR027304">
    <property type="entry name" value="Trigger_fact/SurA_dom_sf"/>
</dbReference>
<dbReference type="PANTHER" id="PTHR47637">
    <property type="entry name" value="CHAPERONE SURA"/>
    <property type="match status" value="1"/>
</dbReference>
<dbReference type="PANTHER" id="PTHR47637:SF1">
    <property type="entry name" value="CHAPERONE SURA"/>
    <property type="match status" value="1"/>
</dbReference>
<dbReference type="Pfam" id="PF00639">
    <property type="entry name" value="Rotamase"/>
    <property type="match status" value="1"/>
</dbReference>
<dbReference type="Pfam" id="PF13616">
    <property type="entry name" value="Rotamase_3"/>
    <property type="match status" value="1"/>
</dbReference>
<dbReference type="Pfam" id="PF09312">
    <property type="entry name" value="SurA_N"/>
    <property type="match status" value="1"/>
</dbReference>
<dbReference type="SUPFAM" id="SSF54534">
    <property type="entry name" value="FKBP-like"/>
    <property type="match status" value="2"/>
</dbReference>
<dbReference type="SUPFAM" id="SSF109998">
    <property type="entry name" value="Triger factor/SurA peptide-binding domain-like"/>
    <property type="match status" value="1"/>
</dbReference>
<dbReference type="PROSITE" id="PS01096">
    <property type="entry name" value="PPIC_PPIASE_1"/>
    <property type="match status" value="2"/>
</dbReference>
<dbReference type="PROSITE" id="PS50198">
    <property type="entry name" value="PPIC_PPIASE_2"/>
    <property type="match status" value="2"/>
</dbReference>
<sequence>MRLRSFAFLGFMLLVAMAPSMASAQPQPLDRIVAVVNKDAIMQSRLEDRVTQVRRQMASRNVPAPNEADLRRQVLDRMILEQIQLQMAERANLSIDDTQLNATVRGIAEDNGMSMDEFADALEEDGMSLASMREQVRREMLLRQVQQSQVASRVNVTDREVERYLDQQGETADTAYHLAHILVSVPESPTPEQVEQAQAKVRDLYRQLQNGANFAQLATAESDGQQALSGGDLGWRRGDQLPSLFADVVPTLSNGEVSEPIRSPSGFHLVKLIDTRGQQGEQKRVVTENRVRHILIGTNPNRNDQQAEALARDIRQRIANGESFAALAQEYSDDDGSALDGGELGWTRPGQMVPAFEDAVKALDVGELSQPVRSRFGYHVIELEDRRRQDVTRDAQREQIRQTLFQRKVSDEMEAWTQEIRSGAYIDNRLEDGRQ</sequence>